<gene>
    <name evidence="7" type="primary">vrtL</name>
</gene>
<accession>D7PHY8</accession>
<name>VRTL_PENAE</name>
<protein>
    <recommendedName>
        <fullName evidence="7">Efflux pump vrtL</fullName>
    </recommendedName>
    <alternativeName>
        <fullName evidence="7">Viridicatumtoxin synthesis protein L</fullName>
    </alternativeName>
</protein>
<organism>
    <name type="scientific">Penicillium aethiopicum</name>
    <dbReference type="NCBI Taxonomy" id="36650"/>
    <lineage>
        <taxon>Eukaryota</taxon>
        <taxon>Fungi</taxon>
        <taxon>Dikarya</taxon>
        <taxon>Ascomycota</taxon>
        <taxon>Pezizomycotina</taxon>
        <taxon>Eurotiomycetes</taxon>
        <taxon>Eurotiomycetidae</taxon>
        <taxon>Eurotiales</taxon>
        <taxon>Aspergillaceae</taxon>
        <taxon>Penicillium</taxon>
    </lineage>
</organism>
<sequence>MSKLSDNHSSASEGEKEAGDLESGPTAISSEPSFDDADRDPNLITWDGPKDPENPKNWPKGLRWKNTWTVSLFVFISPVSSSMIAPAMSDLAKSLGMHAEIEIYLSLSIFILAYSIGPIFFGPASELYGRVRLLQISNVWYLAWNLGCGFATTKGQLFAFRFLAGIGGSAPLAIGGGAISDMWTAEERGKAMGVYTLGPLLGPVVGPIAGGFIAEYSTWRWVFWSTSAAALAVQVVGFFWLQECHPGTLLRKRRDRLAKETGNENLHTAEKVETLGYKLLHAFERPVKMFTTQPIVFCMAIYMAYLFGISYLMFATFPEIWTVVYHESPGIGGLNYLSIAIGSFIGLFFNLKLVDRIYRSLKARNNGVGKPEYRMPSLAVGSVISTIGLFWYGWSIGNTHWIMPNIGALIFAMGTISCLQGMQTYIVDSYQTYAASAMAACAVLRSLCGFGFPLFAPYMYNSLGYGWGTSLLAFITMVVGWGAPFAFWHFGPRLRAMSKYASG</sequence>
<keyword id="KW-0325">Glycoprotein</keyword>
<keyword id="KW-0472">Membrane</keyword>
<keyword id="KW-0812">Transmembrane</keyword>
<keyword id="KW-1133">Transmembrane helix</keyword>
<keyword id="KW-0813">Transport</keyword>
<proteinExistence type="evidence at protein level"/>
<comment type="function">
    <text evidence="5">Efflux pump; part of the gene cluster that mediates the biosynthesis of viridicatumtoxin, a tetracycline-like fungal meroterpenoid with a unique, fused spirobicyclic ring system (PubMed:20534346).</text>
</comment>
<comment type="subcellular location">
    <subcellularLocation>
        <location evidence="1">Membrane</location>
        <topology evidence="1">Multi-pass membrane protein</topology>
    </subcellularLocation>
</comment>
<comment type="biotechnology">
    <text evidence="4 6">Viridicatumtoxin and its derivative, viridicatumtoxin B, exhibit anti-methicillin-resistant Staphylococcus aureus (anti-MRSA) activity (PubMed:19168978). Moreover, viridicatumtoxin and a C2 acetyl analog, spirohexaline, have been demonstrated to inhibit bacterial undecaprenyl diphosphate synthase, a potential new target for antibiotic development (PubMed:27049441).</text>
</comment>
<comment type="similarity">
    <text evidence="8">Belongs to the major facilitator superfamily.</text>
</comment>
<feature type="chain" id="PRO_0000436819" description="Efflux pump vrtL">
    <location>
        <begin position="1"/>
        <end position="503"/>
    </location>
</feature>
<feature type="transmembrane region" description="Helical" evidence="1">
    <location>
        <begin position="68"/>
        <end position="88"/>
    </location>
</feature>
<feature type="transmembrane region" description="Helical" evidence="1">
    <location>
        <begin position="101"/>
        <end position="121"/>
    </location>
</feature>
<feature type="transmembrane region" description="Helical" evidence="1">
    <location>
        <begin position="133"/>
        <end position="153"/>
    </location>
</feature>
<feature type="transmembrane region" description="Helical" evidence="1">
    <location>
        <begin position="162"/>
        <end position="182"/>
    </location>
</feature>
<feature type="transmembrane region" description="Helical" evidence="1">
    <location>
        <begin position="194"/>
        <end position="214"/>
    </location>
</feature>
<feature type="transmembrane region" description="Helical" evidence="1">
    <location>
        <begin position="221"/>
        <end position="241"/>
    </location>
</feature>
<feature type="transmembrane region" description="Helical" evidence="1">
    <location>
        <begin position="295"/>
        <end position="315"/>
    </location>
</feature>
<feature type="transmembrane region" description="Helical" evidence="1">
    <location>
        <begin position="329"/>
        <end position="349"/>
    </location>
</feature>
<feature type="transmembrane region" description="Helical" evidence="1">
    <location>
        <begin position="377"/>
        <end position="397"/>
    </location>
</feature>
<feature type="transmembrane region" description="Helical" evidence="1">
    <location>
        <begin position="401"/>
        <end position="421"/>
    </location>
</feature>
<feature type="transmembrane region" description="Helical" evidence="1">
    <location>
        <begin position="432"/>
        <end position="454"/>
    </location>
</feature>
<feature type="transmembrane region" description="Helical" evidence="1">
    <location>
        <begin position="471"/>
        <end position="491"/>
    </location>
</feature>
<feature type="region of interest" description="Disordered" evidence="3">
    <location>
        <begin position="1"/>
        <end position="59"/>
    </location>
</feature>
<feature type="glycosylation site" description="N-linked (GlcNAc...) asparagine" evidence="2">
    <location>
        <position position="7"/>
    </location>
</feature>
<dbReference type="EMBL" id="GU574477">
    <property type="protein sequence ID" value="ADI24938.1"/>
    <property type="molecule type" value="Genomic_DNA"/>
</dbReference>
<dbReference type="SMR" id="D7PHY8"/>
<dbReference type="GlyCosmos" id="D7PHY8">
    <property type="glycosylation" value="1 site, No reported glycans"/>
</dbReference>
<dbReference type="GO" id="GO:0016020">
    <property type="term" value="C:membrane"/>
    <property type="evidence" value="ECO:0007669"/>
    <property type="project" value="UniProtKB-SubCell"/>
</dbReference>
<dbReference type="GO" id="GO:0022857">
    <property type="term" value="F:transmembrane transporter activity"/>
    <property type="evidence" value="ECO:0007669"/>
    <property type="project" value="InterPro"/>
</dbReference>
<dbReference type="GO" id="GO:0140872">
    <property type="term" value="P:viridicatumtoxin biosynthetic process"/>
    <property type="evidence" value="ECO:0000304"/>
    <property type="project" value="GO_Central"/>
</dbReference>
<dbReference type="CDD" id="cd17323">
    <property type="entry name" value="MFS_Tpo1_MDR_like"/>
    <property type="match status" value="1"/>
</dbReference>
<dbReference type="FunFam" id="1.20.1250.20:FF:000011">
    <property type="entry name" value="MFS multidrug transporter, putative"/>
    <property type="match status" value="1"/>
</dbReference>
<dbReference type="Gene3D" id="1.20.1250.20">
    <property type="entry name" value="MFS general substrate transporter like domains"/>
    <property type="match status" value="1"/>
</dbReference>
<dbReference type="InterPro" id="IPR011701">
    <property type="entry name" value="MFS"/>
</dbReference>
<dbReference type="InterPro" id="IPR020846">
    <property type="entry name" value="MFS_dom"/>
</dbReference>
<dbReference type="InterPro" id="IPR036259">
    <property type="entry name" value="MFS_trans_sf"/>
</dbReference>
<dbReference type="PANTHER" id="PTHR23502">
    <property type="entry name" value="MAJOR FACILITATOR SUPERFAMILY"/>
    <property type="match status" value="1"/>
</dbReference>
<dbReference type="PANTHER" id="PTHR23502:SF143">
    <property type="entry name" value="MULTIDRUG TRANSPORTER, PUTATIVE (AFU_ORTHOLOGUE AFUA_7G04900)-RELATED"/>
    <property type="match status" value="1"/>
</dbReference>
<dbReference type="Pfam" id="PF07690">
    <property type="entry name" value="MFS_1"/>
    <property type="match status" value="1"/>
</dbReference>
<dbReference type="SUPFAM" id="SSF103473">
    <property type="entry name" value="MFS general substrate transporter"/>
    <property type="match status" value="1"/>
</dbReference>
<dbReference type="PROSITE" id="PS50850">
    <property type="entry name" value="MFS"/>
    <property type="match status" value="1"/>
</dbReference>
<evidence type="ECO:0000255" key="1"/>
<evidence type="ECO:0000255" key="2">
    <source>
        <dbReference type="PROSITE-ProRule" id="PRU00498"/>
    </source>
</evidence>
<evidence type="ECO:0000256" key="3">
    <source>
        <dbReference type="SAM" id="MobiDB-lite"/>
    </source>
</evidence>
<evidence type="ECO:0000269" key="4">
    <source>
    </source>
</evidence>
<evidence type="ECO:0000269" key="5">
    <source>
    </source>
</evidence>
<evidence type="ECO:0000269" key="6">
    <source>
    </source>
</evidence>
<evidence type="ECO:0000303" key="7">
    <source>
    </source>
</evidence>
<evidence type="ECO:0000305" key="8"/>
<reference key="1">
    <citation type="journal article" date="2010" name="Chem. Biol.">
        <title>Identification of the viridicatumtoxin and griseofulvin gene clusters from Penicillium aethiopicum.</title>
        <authorList>
            <person name="Chooi Y.H."/>
            <person name="Cacho R."/>
            <person name="Tang Y."/>
        </authorList>
    </citation>
    <scope>NUCLEOTIDE SEQUENCE [GENOMIC DNA]</scope>
    <scope>FUNCTION</scope>
    <source>
        <strain>IBT 5753</strain>
    </source>
</reference>
<reference key="2">
    <citation type="journal article" date="2008" name="J. Antibiot.">
        <title>Viridicatumtoxin B, a new anti-MRSA agent from Penicillium sp. FR11.</title>
        <authorList>
            <person name="Zheng C.J."/>
            <person name="Yu H.E."/>
            <person name="Kim E.H."/>
            <person name="Kim W.G."/>
        </authorList>
    </citation>
    <scope>BIOTECHNOLOGY</scope>
</reference>
<reference key="3">
    <citation type="journal article" date="2016" name="J. Antibiot.">
        <title>Inhibition of bacterial undecaprenyl pyrophosphate synthase by small fungal molecules.</title>
        <authorList>
            <person name="Inokoshi J."/>
            <person name="Nakamura Y."/>
            <person name="Komada S."/>
            <person name="Komatsu K."/>
            <person name="Umeyama H."/>
            <person name="Tomoda H."/>
        </authorList>
    </citation>
    <scope>BIOTECHNOLOGY</scope>
</reference>